<reference key="1">
    <citation type="submission" date="2006-09" db="EMBL/GenBank/DDBJ databases">
        <authorList>
            <consortium name="The Klebsiella pneumonia Genome Sequencing Project"/>
            <person name="McClelland M."/>
            <person name="Sanderson E.K."/>
            <person name="Spieth J."/>
            <person name="Clifton W.S."/>
            <person name="Latreille P."/>
            <person name="Sabo A."/>
            <person name="Pepin K."/>
            <person name="Bhonagiri V."/>
            <person name="Porwollik S."/>
            <person name="Ali J."/>
            <person name="Wilson R.K."/>
        </authorList>
    </citation>
    <scope>NUCLEOTIDE SEQUENCE [LARGE SCALE GENOMIC DNA]</scope>
    <source>
        <strain>ATCC 700721 / MGH 78578</strain>
    </source>
</reference>
<name>ACPH_KLEP7</name>
<protein>
    <recommendedName>
        <fullName evidence="1">Acyl carrier protein phosphodiesterase</fullName>
        <shortName evidence="1">ACP phosphodiesterase</shortName>
        <ecNumber evidence="1">3.1.4.14</ecNumber>
    </recommendedName>
</protein>
<dbReference type="EC" id="3.1.4.14" evidence="1"/>
<dbReference type="EMBL" id="CP000647">
    <property type="protein sequence ID" value="ABR75807.1"/>
    <property type="molecule type" value="Genomic_DNA"/>
</dbReference>
<dbReference type="RefSeq" id="WP_009307908.1">
    <property type="nucleotide sequence ID" value="NC_009648.1"/>
</dbReference>
<dbReference type="SMR" id="A6T5D6"/>
<dbReference type="STRING" id="272620.KPN_00355"/>
<dbReference type="PaxDb" id="272620-KPN_00355"/>
<dbReference type="EnsemblBacteria" id="ABR75807">
    <property type="protein sequence ID" value="ABR75807"/>
    <property type="gene ID" value="KPN_00355"/>
</dbReference>
<dbReference type="KEGG" id="kpn:KPN_00355"/>
<dbReference type="HOGENOM" id="CLU_099370_1_0_6"/>
<dbReference type="Proteomes" id="UP000000265">
    <property type="component" value="Chromosome"/>
</dbReference>
<dbReference type="GO" id="GO:0008770">
    <property type="term" value="F:[acyl-carrier-protein] phosphodiesterase activity"/>
    <property type="evidence" value="ECO:0007669"/>
    <property type="project" value="UniProtKB-UniRule"/>
</dbReference>
<dbReference type="GO" id="GO:0006633">
    <property type="term" value="P:fatty acid biosynthetic process"/>
    <property type="evidence" value="ECO:0007669"/>
    <property type="project" value="UniProtKB-UniRule"/>
</dbReference>
<dbReference type="HAMAP" id="MF_01950">
    <property type="entry name" value="AcpH"/>
    <property type="match status" value="1"/>
</dbReference>
<dbReference type="InterPro" id="IPR007431">
    <property type="entry name" value="ACP_PD"/>
</dbReference>
<dbReference type="InterPro" id="IPR023491">
    <property type="entry name" value="ACP_phosphodiesterase_gpbac"/>
</dbReference>
<dbReference type="NCBIfam" id="NF007466">
    <property type="entry name" value="PRK10045.1"/>
    <property type="match status" value="1"/>
</dbReference>
<dbReference type="PANTHER" id="PTHR38764">
    <property type="entry name" value="ACYL CARRIER PROTEIN PHOSPHODIESTERASE"/>
    <property type="match status" value="1"/>
</dbReference>
<dbReference type="PANTHER" id="PTHR38764:SF1">
    <property type="entry name" value="ACYL CARRIER PROTEIN PHOSPHODIESTERASE"/>
    <property type="match status" value="1"/>
</dbReference>
<dbReference type="Pfam" id="PF04336">
    <property type="entry name" value="ACP_PD"/>
    <property type="match status" value="1"/>
</dbReference>
<dbReference type="PIRSF" id="PIRSF011489">
    <property type="entry name" value="DUF479"/>
    <property type="match status" value="1"/>
</dbReference>
<sequence>MNFLAHLHLAHLADSSLPGNLMADFVRGNPQGDYPAEIIDGIYMHRRIDVMTDNLAEVKEAREWFRPQTRRVAPITLDVMWDHFLSQHWAQLSPDLPLDEFVRYAERQIVPILPDSPPRFVNLNQYLWSERWLERYREMDFIQRVLNGMASRRPRLEALRDSWQDLDTHYDRLETQFWRFYPQMMRLAENKQL</sequence>
<accession>A6T5D6</accession>
<gene>
    <name evidence="1" type="primary">acpH</name>
    <name type="ordered locus">KPN78578_03460</name>
    <name type="ORF">KPN_00355</name>
</gene>
<organism>
    <name type="scientific">Klebsiella pneumoniae subsp. pneumoniae (strain ATCC 700721 / MGH 78578)</name>
    <dbReference type="NCBI Taxonomy" id="272620"/>
    <lineage>
        <taxon>Bacteria</taxon>
        <taxon>Pseudomonadati</taxon>
        <taxon>Pseudomonadota</taxon>
        <taxon>Gammaproteobacteria</taxon>
        <taxon>Enterobacterales</taxon>
        <taxon>Enterobacteriaceae</taxon>
        <taxon>Klebsiella/Raoultella group</taxon>
        <taxon>Klebsiella</taxon>
        <taxon>Klebsiella pneumoniae complex</taxon>
    </lineage>
</organism>
<proteinExistence type="inferred from homology"/>
<feature type="chain" id="PRO_1000070626" description="Acyl carrier protein phosphodiesterase">
    <location>
        <begin position="1"/>
        <end position="193"/>
    </location>
</feature>
<evidence type="ECO:0000255" key="1">
    <source>
        <dbReference type="HAMAP-Rule" id="MF_01950"/>
    </source>
</evidence>
<comment type="function">
    <text evidence="1">Converts holo-ACP to apo-ACP by hydrolytic cleavage of the phosphopantetheine prosthetic group from ACP.</text>
</comment>
<comment type="catalytic activity">
    <reaction evidence="1">
        <text>holo-[ACP] + H2O = apo-[ACP] + (R)-4'-phosphopantetheine + H(+)</text>
        <dbReference type="Rhea" id="RHEA:20537"/>
        <dbReference type="Rhea" id="RHEA-COMP:9685"/>
        <dbReference type="Rhea" id="RHEA-COMP:9690"/>
        <dbReference type="ChEBI" id="CHEBI:15377"/>
        <dbReference type="ChEBI" id="CHEBI:15378"/>
        <dbReference type="ChEBI" id="CHEBI:29999"/>
        <dbReference type="ChEBI" id="CHEBI:61723"/>
        <dbReference type="ChEBI" id="CHEBI:64479"/>
        <dbReference type="EC" id="3.1.4.14"/>
    </reaction>
</comment>
<comment type="similarity">
    <text evidence="1">Belongs to the AcpH family.</text>
</comment>
<keyword id="KW-0275">Fatty acid biosynthesis</keyword>
<keyword id="KW-0276">Fatty acid metabolism</keyword>
<keyword id="KW-0378">Hydrolase</keyword>
<keyword id="KW-0444">Lipid biosynthesis</keyword>
<keyword id="KW-0443">Lipid metabolism</keyword>